<proteinExistence type="evidence at protein level"/>
<gene>
    <name type="primary">NRT2.5</name>
    <name type="ordered locus">At1g12940</name>
    <name type="ORF">F13K23.20</name>
</gene>
<protein>
    <recommendedName>
        <fullName>High affinity nitrate transporter 2.5</fullName>
        <shortName>AtNRT2:5</shortName>
    </recommendedName>
</protein>
<dbReference type="EMBL" id="AC012187">
    <property type="protein sequence ID" value="AAF78499.1"/>
    <property type="molecule type" value="Genomic_DNA"/>
</dbReference>
<dbReference type="EMBL" id="CP002684">
    <property type="protein sequence ID" value="AEE28952.1"/>
    <property type="molecule type" value="Genomic_DNA"/>
</dbReference>
<dbReference type="PIR" id="C86263">
    <property type="entry name" value="C86263"/>
</dbReference>
<dbReference type="RefSeq" id="NP_172754.1">
    <property type="nucleotide sequence ID" value="NM_101165.3"/>
</dbReference>
<dbReference type="SMR" id="Q9LPV5"/>
<dbReference type="BioGRID" id="23092">
    <property type="interactions" value="1"/>
</dbReference>
<dbReference type="FunCoup" id="Q9LPV5">
    <property type="interactions" value="494"/>
</dbReference>
<dbReference type="STRING" id="3702.Q9LPV5"/>
<dbReference type="PaxDb" id="3702-AT1G12940.1"/>
<dbReference type="ProteomicsDB" id="250603"/>
<dbReference type="EnsemblPlants" id="AT1G12940.1">
    <property type="protein sequence ID" value="AT1G12940.1"/>
    <property type="gene ID" value="AT1G12940"/>
</dbReference>
<dbReference type="GeneID" id="837852"/>
<dbReference type="Gramene" id="AT1G12940.1">
    <property type="protein sequence ID" value="AT1G12940.1"/>
    <property type="gene ID" value="AT1G12940"/>
</dbReference>
<dbReference type="KEGG" id="ath:AT1G12940"/>
<dbReference type="Araport" id="AT1G12940"/>
<dbReference type="TAIR" id="AT1G12940">
    <property type="gene designation" value="NRT2.5"/>
</dbReference>
<dbReference type="eggNOG" id="ENOG502QPIC">
    <property type="taxonomic scope" value="Eukaryota"/>
</dbReference>
<dbReference type="HOGENOM" id="CLU_024204_0_0_1"/>
<dbReference type="InParanoid" id="Q9LPV5"/>
<dbReference type="OMA" id="TFWAWNL"/>
<dbReference type="OrthoDB" id="434240at2759"/>
<dbReference type="PhylomeDB" id="Q9LPV5"/>
<dbReference type="PRO" id="PR:Q9LPV5"/>
<dbReference type="Proteomes" id="UP000006548">
    <property type="component" value="Chromosome 1"/>
</dbReference>
<dbReference type="ExpressionAtlas" id="Q9LPV5">
    <property type="expression patterns" value="baseline and differential"/>
</dbReference>
<dbReference type="GO" id="GO:0005886">
    <property type="term" value="C:plasma membrane"/>
    <property type="evidence" value="ECO:0007669"/>
    <property type="project" value="UniProtKB-SubCell"/>
</dbReference>
<dbReference type="GO" id="GO:0015112">
    <property type="term" value="F:nitrate transmembrane transporter activity"/>
    <property type="evidence" value="ECO:0007669"/>
    <property type="project" value="InterPro"/>
</dbReference>
<dbReference type="GO" id="GO:0042128">
    <property type="term" value="P:nitrate assimilation"/>
    <property type="evidence" value="ECO:0007669"/>
    <property type="project" value="UniProtKB-KW"/>
</dbReference>
<dbReference type="CDD" id="cd17341">
    <property type="entry name" value="MFS_NRT2_like"/>
    <property type="match status" value="1"/>
</dbReference>
<dbReference type="FunFam" id="1.20.1250.20:FF:000198">
    <property type="entry name" value="High affinity nitrate transporter 2.5"/>
    <property type="match status" value="1"/>
</dbReference>
<dbReference type="FunFam" id="1.20.1250.20:FF:000053">
    <property type="entry name" value="Nitrate transporter 2.1"/>
    <property type="match status" value="1"/>
</dbReference>
<dbReference type="Gene3D" id="1.20.1250.20">
    <property type="entry name" value="MFS general substrate transporter like domains"/>
    <property type="match status" value="2"/>
</dbReference>
<dbReference type="InterPro" id="IPR011701">
    <property type="entry name" value="MFS"/>
</dbReference>
<dbReference type="InterPro" id="IPR036259">
    <property type="entry name" value="MFS_trans_sf"/>
</dbReference>
<dbReference type="InterPro" id="IPR044772">
    <property type="entry name" value="NO3_transporter"/>
</dbReference>
<dbReference type="PANTHER" id="PTHR23515">
    <property type="entry name" value="HIGH-AFFINITY NITRATE TRANSPORTER 2.3"/>
    <property type="match status" value="1"/>
</dbReference>
<dbReference type="Pfam" id="PF07690">
    <property type="entry name" value="MFS_1"/>
    <property type="match status" value="1"/>
</dbReference>
<dbReference type="SUPFAM" id="SSF103473">
    <property type="entry name" value="MFS general substrate transporter"/>
    <property type="match status" value="1"/>
</dbReference>
<accession>Q9LPV5</accession>
<evidence type="ECO:0000255" key="1"/>
<evidence type="ECO:0000256" key="2">
    <source>
        <dbReference type="SAM" id="MobiDB-lite"/>
    </source>
</evidence>
<evidence type="ECO:0000269" key="3">
    <source>
    </source>
</evidence>
<evidence type="ECO:0000269" key="4">
    <source>
    </source>
</evidence>
<evidence type="ECO:0000269" key="5">
    <source>
    </source>
</evidence>
<evidence type="ECO:0000269" key="6">
    <source>
    </source>
</evidence>
<evidence type="ECO:0000269" key="7">
    <source>
    </source>
</evidence>
<evidence type="ECO:0000269" key="8">
    <source>
    </source>
</evidence>
<evidence type="ECO:0000269" key="9">
    <source>
    </source>
</evidence>
<evidence type="ECO:0000269" key="10">
    <source>
    </source>
</evidence>
<evidence type="ECO:0000305" key="11"/>
<organism>
    <name type="scientific">Arabidopsis thaliana</name>
    <name type="common">Mouse-ear cress</name>
    <dbReference type="NCBI Taxonomy" id="3702"/>
    <lineage>
        <taxon>Eukaryota</taxon>
        <taxon>Viridiplantae</taxon>
        <taxon>Streptophyta</taxon>
        <taxon>Embryophyta</taxon>
        <taxon>Tracheophyta</taxon>
        <taxon>Spermatophyta</taxon>
        <taxon>Magnoliopsida</taxon>
        <taxon>eudicotyledons</taxon>
        <taxon>Gunneridae</taxon>
        <taxon>Pentapetalae</taxon>
        <taxon>rosids</taxon>
        <taxon>malvids</taxon>
        <taxon>Brassicales</taxon>
        <taxon>Brassicaceae</taxon>
        <taxon>Camelineae</taxon>
        <taxon>Arabidopsis</taxon>
    </lineage>
</organism>
<feature type="chain" id="PRO_0000400102" description="High affinity nitrate transporter 2.5">
    <location>
        <begin position="1"/>
        <end position="502"/>
    </location>
</feature>
<feature type="transmembrane region" description="Helical" evidence="1">
    <location>
        <begin position="51"/>
        <end position="71"/>
    </location>
</feature>
<feature type="transmembrane region" description="Helical" evidence="1">
    <location>
        <begin position="87"/>
        <end position="107"/>
    </location>
</feature>
<feature type="transmembrane region" description="Helical" evidence="1">
    <location>
        <begin position="111"/>
        <end position="131"/>
    </location>
</feature>
<feature type="transmembrane region" description="Helical" evidence="1">
    <location>
        <begin position="133"/>
        <end position="153"/>
    </location>
</feature>
<feature type="transmembrane region" description="Helical" evidence="1">
    <location>
        <begin position="172"/>
        <end position="192"/>
    </location>
</feature>
<feature type="transmembrane region" description="Helical" evidence="1">
    <location>
        <begin position="208"/>
        <end position="228"/>
    </location>
</feature>
<feature type="transmembrane region" description="Helical" evidence="1">
    <location>
        <begin position="264"/>
        <end position="284"/>
    </location>
</feature>
<feature type="transmembrane region" description="Helical" evidence="1">
    <location>
        <begin position="300"/>
        <end position="320"/>
    </location>
</feature>
<feature type="transmembrane region" description="Helical" evidence="1">
    <location>
        <begin position="334"/>
        <end position="354"/>
    </location>
</feature>
<feature type="transmembrane region" description="Helical" evidence="1">
    <location>
        <begin position="361"/>
        <end position="381"/>
    </location>
</feature>
<feature type="transmembrane region" description="Helical" evidence="1">
    <location>
        <begin position="393"/>
        <end position="413"/>
    </location>
</feature>
<feature type="transmembrane region" description="Helical" evidence="1">
    <location>
        <begin position="423"/>
        <end position="443"/>
    </location>
</feature>
<feature type="region of interest" description="Disordered" evidence="2">
    <location>
        <begin position="477"/>
        <end position="502"/>
    </location>
</feature>
<comment type="function">
    <text evidence="4 8 9 10">Nitrate transporter involved in the constitutive high-affinity transport system (cHATS) under long-term N starvation conditions (PubMed:15107992, PubMed:25065551). Predominantly expressed in roots of nitrate-deprived plants as a 150 kDa molecular complex with NRT3.1 representing the major contributor to cHATS influx (PubMed:25474587). The principal role of this cHATS is to enable roots previously deprived of nitrate to absorb this ion and initiate induction of nitrate-inducible genes (PubMed:25474587). Not involved in transfer of nitrate from roots to shoots (PubMed:25474587). Contributes to phloem loading of nitrate in shoots during N starvation, but not required for growth and nitrate uptake in young plants (PubMed:25065551). Required for the nitrate uptake-independent plant growth promotion and lateral root response to the rhizospheric Phyllobacterium (PubMed:23398541). Might be involved in the transfer of nitrate from stored pools to cytoplasm (PubMed:15107992).</text>
</comment>
<comment type="biophysicochemical properties">
    <kinetics>
        <KM evidence="10">10.75 uM for nitrate</KM>
    </kinetics>
</comment>
<comment type="subunit">
    <text evidence="7 10">Oligomeric molecular complex with NRT3.1 (PubMed:22432443, PubMed:25474587).</text>
</comment>
<comment type="subcellular location">
    <subcellularLocation>
        <location evidence="9">Cell membrane</location>
        <topology evidence="11">Multi-pass membrane protein</topology>
    </subcellularLocation>
</comment>
<comment type="tissue specificity">
    <text evidence="3 6 8 9">Expressed in roots, shoots and seeds (PubMed:12668777, PubMed:17540716). Expressed in leaves (PubMed:23398541). Expressed in root hair zone of the primary root and the lateral roots, but not in the lateral root tip or in older parts of the roots (PubMed:25065551). Detected mainly in the epidermis and the cortex (PubMed:25065551). Expressed in shoots only in higher-order veins (PubMed:25065551).</text>
</comment>
<comment type="induction">
    <text evidence="3 4 5 6 9 10">Down-regulated by nitrate and by imbibition (PubMed:12668777, PubMed:17540716, PubMed:25474587). No induction by growth on low nitrate concentration, but strong induction in mutant with disruption in both NRT2.1 and NRT2.2 (PubMed:15107992). However, this overexpression could not restore the nitrate influx (PubMed:15107992). Induced under long-term nitrogen starvation (PubMed:25065551). Strongly up-regulated upon inoculation with the plant growth-promoting rhizobacteria Phyllobacterium (PubMed:16160849).</text>
</comment>
<comment type="disruption phenotype">
    <text evidence="8 9 10">Loss of plant growth and root system architecture responses to the rhizospheric Phyllobacterium (PubMed:23398541). Decreased nitrate uptake in the high-affinity range (PubMed:25065551, PubMed:25474587).</text>
</comment>
<comment type="similarity">
    <text evidence="11">Belongs to the major facilitator superfamily. Nitrate/nitrite porter (TC 2.A.1.8) family.</text>
</comment>
<keyword id="KW-1003">Cell membrane</keyword>
<keyword id="KW-0472">Membrane</keyword>
<keyword id="KW-0534">Nitrate assimilation</keyword>
<keyword id="KW-1185">Reference proteome</keyword>
<keyword id="KW-0812">Transmembrane</keyword>
<keyword id="KW-1133">Transmembrane helix</keyword>
<name>NRT25_ARATH</name>
<reference key="1">
    <citation type="journal article" date="2000" name="Nature">
        <title>Sequence and analysis of chromosome 1 of the plant Arabidopsis thaliana.</title>
        <authorList>
            <person name="Theologis A."/>
            <person name="Ecker J.R."/>
            <person name="Palm C.J."/>
            <person name="Federspiel N.A."/>
            <person name="Kaul S."/>
            <person name="White O."/>
            <person name="Alonso J."/>
            <person name="Altafi H."/>
            <person name="Araujo R."/>
            <person name="Bowman C.L."/>
            <person name="Brooks S.Y."/>
            <person name="Buehler E."/>
            <person name="Chan A."/>
            <person name="Chao Q."/>
            <person name="Chen H."/>
            <person name="Cheuk R.F."/>
            <person name="Chin C.W."/>
            <person name="Chung M.K."/>
            <person name="Conn L."/>
            <person name="Conway A.B."/>
            <person name="Conway A.R."/>
            <person name="Creasy T.H."/>
            <person name="Dewar K."/>
            <person name="Dunn P."/>
            <person name="Etgu P."/>
            <person name="Feldblyum T.V."/>
            <person name="Feng J.-D."/>
            <person name="Fong B."/>
            <person name="Fujii C.Y."/>
            <person name="Gill J.E."/>
            <person name="Goldsmith A.D."/>
            <person name="Haas B."/>
            <person name="Hansen N.F."/>
            <person name="Hughes B."/>
            <person name="Huizar L."/>
            <person name="Hunter J.L."/>
            <person name="Jenkins J."/>
            <person name="Johnson-Hopson C."/>
            <person name="Khan S."/>
            <person name="Khaykin E."/>
            <person name="Kim C.J."/>
            <person name="Koo H.L."/>
            <person name="Kremenetskaia I."/>
            <person name="Kurtz D.B."/>
            <person name="Kwan A."/>
            <person name="Lam B."/>
            <person name="Langin-Hooper S."/>
            <person name="Lee A."/>
            <person name="Lee J.M."/>
            <person name="Lenz C.A."/>
            <person name="Li J.H."/>
            <person name="Li Y.-P."/>
            <person name="Lin X."/>
            <person name="Liu S.X."/>
            <person name="Liu Z.A."/>
            <person name="Luros J.S."/>
            <person name="Maiti R."/>
            <person name="Marziali A."/>
            <person name="Militscher J."/>
            <person name="Miranda M."/>
            <person name="Nguyen M."/>
            <person name="Nierman W.C."/>
            <person name="Osborne B.I."/>
            <person name="Pai G."/>
            <person name="Peterson J."/>
            <person name="Pham P.K."/>
            <person name="Rizzo M."/>
            <person name="Rooney T."/>
            <person name="Rowley D."/>
            <person name="Sakano H."/>
            <person name="Salzberg S.L."/>
            <person name="Schwartz J.R."/>
            <person name="Shinn P."/>
            <person name="Southwick A.M."/>
            <person name="Sun H."/>
            <person name="Tallon L.J."/>
            <person name="Tambunga G."/>
            <person name="Toriumi M.J."/>
            <person name="Town C.D."/>
            <person name="Utterback T."/>
            <person name="Van Aken S."/>
            <person name="Vaysberg M."/>
            <person name="Vysotskaia V.S."/>
            <person name="Walker M."/>
            <person name="Wu D."/>
            <person name="Yu G."/>
            <person name="Fraser C.M."/>
            <person name="Venter J.C."/>
            <person name="Davis R.W."/>
        </authorList>
    </citation>
    <scope>NUCLEOTIDE SEQUENCE [LARGE SCALE GENOMIC DNA]</scope>
    <source>
        <strain>cv. Columbia</strain>
    </source>
</reference>
<reference key="2">
    <citation type="journal article" date="2017" name="Plant J.">
        <title>Araport11: a complete reannotation of the Arabidopsis thaliana reference genome.</title>
        <authorList>
            <person name="Cheng C.Y."/>
            <person name="Krishnakumar V."/>
            <person name="Chan A.P."/>
            <person name="Thibaud-Nissen F."/>
            <person name="Schobel S."/>
            <person name="Town C.D."/>
        </authorList>
    </citation>
    <scope>GENOME REANNOTATION</scope>
    <source>
        <strain>cv. Columbia</strain>
    </source>
</reference>
<reference key="3">
    <citation type="journal article" date="2002" name="J. Exp. Bot.">
        <title>Nitrate transport in plants: which gene and which control?</title>
        <authorList>
            <person name="Orsel M."/>
            <person name="Filleur S."/>
            <person name="Fraisier V."/>
            <person name="Daniel-Vedele F."/>
        </authorList>
    </citation>
    <scope>GENE FAMILY</scope>
</reference>
<reference key="4">
    <citation type="journal article" date="2003" name="Plant Cell Physiol.">
        <title>Regulation of NRT1 and NRT2 gene families of Arabidopsis thaliana: responses to nitrate provision.</title>
        <authorList>
            <person name="Okamoto M."/>
            <person name="Vidmar J.J."/>
            <person name="Glass A.D."/>
        </authorList>
    </citation>
    <scope>TISSUE SPECIFICITY</scope>
    <scope>INDUCTION BY NITRATE</scope>
    <scope>GENE FAMILY</scope>
</reference>
<reference key="5">
    <citation type="journal article" date="2004" name="Planta">
        <title>Disruption of the nitrate transporter genes AtNRT2.1 and AtNRT2.2 restricts growth at low external nitrate concentration.</title>
        <authorList>
            <person name="Orsel M."/>
            <person name="Eulenburg K."/>
            <person name="Krapp A."/>
            <person name="Daniel-Vedele F."/>
        </authorList>
    </citation>
    <scope>FUNCTION</scope>
    <scope>INDUCTION BY NITRATE</scope>
</reference>
<reference key="6">
    <citation type="journal article" date="2006" name="Planta">
        <title>Nitrate-dependent control of root architecture and N nutrition are altered by a plant growth-promoting Phyllobacterium sp.</title>
        <authorList>
            <person name="Mantelin S."/>
            <person name="Desbrosses G."/>
            <person name="Larcher M."/>
            <person name="Tranbarger T.J."/>
            <person name="Cleyet-Marel J.C."/>
            <person name="Touraine B."/>
        </authorList>
    </citation>
    <scope>INDUCTION BY PHYLLOBACTERIUM</scope>
</reference>
<reference key="7">
    <citation type="journal article" date="2007" name="FEBS Lett.">
        <title>Nitrate transporters and peptide transporters.</title>
        <authorList>
            <person name="Tsay Y.F."/>
            <person name="Chiu C.C."/>
            <person name="Tsai C.B."/>
            <person name="Ho C.H."/>
            <person name="Hsu P.K."/>
        </authorList>
    </citation>
    <scope>GENE FAMILY</scope>
</reference>
<reference key="8">
    <citation type="journal article" date="2007" name="Plant Cell">
        <title>The Arabidopsis ATNRT2.7 nitrate transporter controls nitrate content in seeds.</title>
        <authorList>
            <person name="Chopin F."/>
            <person name="Orsel M."/>
            <person name="Dorbe M.F."/>
            <person name="Chardon F."/>
            <person name="Truong H.N."/>
            <person name="Miller A.J."/>
            <person name="Krapp A."/>
            <person name="Daniel-Vedele F."/>
        </authorList>
    </citation>
    <scope>TISSUE SPECIFICITY</scope>
    <scope>INDUCTION BY IMBIBITION</scope>
</reference>
<reference key="9">
    <citation type="journal article" date="2012" name="New Phytol.">
        <title>Nitrate transport capacity of the Arabidopsis thaliana NRT2 family members and their interactions with AtNAR2.1.</title>
        <authorList>
            <person name="Kotur Z."/>
            <person name="Mackenzie N."/>
            <person name="Ramesh S."/>
            <person name="Tyerman S.D."/>
            <person name="Kaiser B.N."/>
            <person name="Glass A.D."/>
        </authorList>
    </citation>
    <scope>INTERACTION WITH NRT3.1</scope>
</reference>
<reference key="10">
    <citation type="journal article" date="2013" name="New Phytol.">
        <title>The NRT2.5 and NRT2.6 genes are involved in growth promotion of Arabidopsis by the plant growth-promoting rhizobacterium (PGPR) strain Phyllobacterium brassicacearum STM196.</title>
        <authorList>
            <person name="Kechid M."/>
            <person name="Desbrosses G."/>
            <person name="Rokhsi W."/>
            <person name="Varoquaux F."/>
            <person name="Djekoun A."/>
            <person name="Touraine B."/>
        </authorList>
    </citation>
    <scope>FUNCTION</scope>
    <scope>DISRUPTION PHENOTYPE</scope>
    <scope>TISSUE SPECIFICITY</scope>
</reference>
<reference key="11">
    <citation type="journal article" date="2014" name="Plant J.">
        <title>The Arabidopsis nitrate transporter NRT2.5 plays a role in nitrate acquisition and remobilization in nitrogen-starved plants.</title>
        <authorList>
            <person name="Lezhneva L."/>
            <person name="Kiba T."/>
            <person name="Feria-Bourrellier A.B."/>
            <person name="Lafouge F."/>
            <person name="Boutet-Mercey S."/>
            <person name="Zoufan P."/>
            <person name="Sakakibara H."/>
            <person name="Daniel-Vedele F."/>
            <person name="Krapp A."/>
        </authorList>
    </citation>
    <scope>FUNCTION</scope>
    <scope>INDUCTION BY NITROGEN</scope>
    <scope>TISSUE SPECIFICITY</scope>
    <scope>SUBCELLULAR LOCATION</scope>
    <scope>DISRUPTION PHENOTYPE</scope>
</reference>
<reference key="12">
    <citation type="journal article" date="2015" name="Plant Cell Environ.">
        <title>A 150 kDa plasma membrane complex of AtNRT2.5 and AtNAR2.1 is the major contributor to constitutive high-affinity nitrate influx in Arabidopsis thaliana.</title>
        <authorList>
            <person name="Kotur Z."/>
            <person name="Glass A.D."/>
        </authorList>
    </citation>
    <scope>FUNCTION</scope>
    <scope>INDUCTION BY NITRATE</scope>
    <scope>SUBUNIT</scope>
    <scope>INTERACTION WITH NRT3.1</scope>
    <scope>DISRUPTION PHENOTYPE</scope>
    <scope>BIOPHYSICOCHEMICAL PROPERTIES</scope>
</reference>
<sequence length="502" mass="54262">MEVEGKGGEAGTTTTTAPRRFALPVDAENKATTFRLFSVAKPHMRAFHLSWFQFFCCFVSTFAAPPLLPVIRENLNLTATDIGNAGIASVSGAVFARIVMGTACDLFGPRLASAALTLSTAPAVYFTAGIKSPIGFIMVRFFAGFSLATFVSTQFWMSSMFSGPVVGSANGIAAGWGNLGGGATQLIMPIVFSLIRNMGATKFTAWRIAFFIPGLFQTLSAFAVLLFGQDLPDGDYWAMHKSGEREKDDVGKVISNGIKNYRGWITALAYGYCFGVELTIDNIIAEYFFDRFHLKLQTAGIIAASFGLANFFARPGGGIFSDFMSRRFGMRGRLWAWWIVQTSGGVLCACLGQISSLTVSIIVMLVFSVFVQAACGLTFGVVPFISRRSLGVVSGMTGAGGNVGAVLTQLIFFKGSTYTRETGITLMGVMSIACSLPICLIYFPQWGGMFCGPSSKKVTEEDYYLAEWNDEEKEKNLHIGSQKFAETSISERGRATTTHPQT</sequence>